<evidence type="ECO:0000255" key="1"/>
<evidence type="ECO:0000269" key="2">
    <source>
    </source>
</evidence>
<evidence type="ECO:0000269" key="3">
    <source>
    </source>
</evidence>
<evidence type="ECO:0000305" key="4"/>
<gene>
    <name type="primary">GEX2</name>
    <name type="ordered locus">At5g49150</name>
    <name type="ORF">K21P3.2</name>
</gene>
<dbReference type="EMBL" id="AB016872">
    <property type="protein sequence ID" value="BAB10333.1"/>
    <property type="status" value="ALT_SEQ"/>
    <property type="molecule type" value="Genomic_DNA"/>
</dbReference>
<dbReference type="EMBL" id="CP002688">
    <property type="protein sequence ID" value="AED95776.1"/>
    <property type="molecule type" value="Genomic_DNA"/>
</dbReference>
<dbReference type="EMBL" id="AY746359">
    <property type="protein sequence ID" value="AAW70161.1"/>
    <property type="molecule type" value="mRNA"/>
</dbReference>
<dbReference type="RefSeq" id="NP_199726.3">
    <property type="nucleotide sequence ID" value="NM_124292.3"/>
</dbReference>
<dbReference type="STRING" id="3702.F4K4R6"/>
<dbReference type="PaxDb" id="3702-AT5G49150.1"/>
<dbReference type="ProteomicsDB" id="220734"/>
<dbReference type="EnsemblPlants" id="AT5G49150.1">
    <property type="protein sequence ID" value="AT5G49150.1"/>
    <property type="gene ID" value="AT5G49150"/>
</dbReference>
<dbReference type="GeneID" id="834974"/>
<dbReference type="Gramene" id="AT5G49150.1">
    <property type="protein sequence ID" value="AT5G49150.1"/>
    <property type="gene ID" value="AT5G49150"/>
</dbReference>
<dbReference type="KEGG" id="ath:AT5G49150"/>
<dbReference type="Araport" id="AT5G49150"/>
<dbReference type="TAIR" id="AT5G49150">
    <property type="gene designation" value="GEX2"/>
</dbReference>
<dbReference type="eggNOG" id="ENOG502QWD1">
    <property type="taxonomic scope" value="Eukaryota"/>
</dbReference>
<dbReference type="HOGENOM" id="CLU_009992_0_0_1"/>
<dbReference type="InParanoid" id="F4K4R6"/>
<dbReference type="PRO" id="PR:F4K4R6"/>
<dbReference type="Proteomes" id="UP000006548">
    <property type="component" value="Chromosome 5"/>
</dbReference>
<dbReference type="ExpressionAtlas" id="F4K4R6">
    <property type="expression patterns" value="baseline"/>
</dbReference>
<dbReference type="GO" id="GO:0005886">
    <property type="term" value="C:plasma membrane"/>
    <property type="evidence" value="ECO:0007669"/>
    <property type="project" value="UniProtKB-SubCell"/>
</dbReference>
<dbReference type="GO" id="GO:0051015">
    <property type="term" value="F:actin filament binding"/>
    <property type="evidence" value="ECO:0007669"/>
    <property type="project" value="InterPro"/>
</dbReference>
<dbReference type="GO" id="GO:0030036">
    <property type="term" value="P:actin cytoskeleton organization"/>
    <property type="evidence" value="ECO:0007669"/>
    <property type="project" value="InterPro"/>
</dbReference>
<dbReference type="GO" id="GO:0061936">
    <property type="term" value="P:fusion of sperm to egg plasma membrane involved in double fertilization forming a zygote and endosperm"/>
    <property type="evidence" value="ECO:0000315"/>
    <property type="project" value="TAIR"/>
</dbReference>
<dbReference type="GO" id="GO:0048235">
    <property type="term" value="P:pollen sperm cell differentiation"/>
    <property type="evidence" value="ECO:0000270"/>
    <property type="project" value="TAIR"/>
</dbReference>
<dbReference type="FunFam" id="2.60.40.10:FF:002225">
    <property type="entry name" value="Gamete expressed 2"/>
    <property type="match status" value="1"/>
</dbReference>
<dbReference type="FunFam" id="2.60.40.3440:FF:000001">
    <property type="entry name" value="Gamete expressed 2"/>
    <property type="match status" value="1"/>
</dbReference>
<dbReference type="Gene3D" id="2.60.40.3440">
    <property type="match status" value="1"/>
</dbReference>
<dbReference type="Gene3D" id="2.60.40.10">
    <property type="entry name" value="Immunoglobulins"/>
    <property type="match status" value="2"/>
</dbReference>
<dbReference type="InterPro" id="IPR044801">
    <property type="entry name" value="Filamin"/>
</dbReference>
<dbReference type="InterPro" id="IPR017868">
    <property type="entry name" value="Filamin/ABP280_repeat-like"/>
</dbReference>
<dbReference type="InterPro" id="IPR001298">
    <property type="entry name" value="Filamin/ABP280_rpt"/>
</dbReference>
<dbReference type="InterPro" id="IPR013783">
    <property type="entry name" value="Ig-like_fold"/>
</dbReference>
<dbReference type="InterPro" id="IPR014756">
    <property type="entry name" value="Ig_E-set"/>
</dbReference>
<dbReference type="InterPro" id="IPR056434">
    <property type="entry name" value="Ig_GEX2_N"/>
</dbReference>
<dbReference type="PANTHER" id="PTHR38537:SF8">
    <property type="entry name" value="FILAMIN-A"/>
    <property type="match status" value="1"/>
</dbReference>
<dbReference type="PANTHER" id="PTHR38537">
    <property type="entry name" value="JITTERBUG, ISOFORM N"/>
    <property type="match status" value="1"/>
</dbReference>
<dbReference type="Pfam" id="PF17963">
    <property type="entry name" value="Big_9"/>
    <property type="match status" value="1"/>
</dbReference>
<dbReference type="Pfam" id="PF00630">
    <property type="entry name" value="Filamin"/>
    <property type="match status" value="1"/>
</dbReference>
<dbReference type="Pfam" id="PF23616">
    <property type="entry name" value="Ig_GEX2_N"/>
    <property type="match status" value="1"/>
</dbReference>
<dbReference type="SMART" id="SM00557">
    <property type="entry name" value="IG_FLMN"/>
    <property type="match status" value="1"/>
</dbReference>
<dbReference type="SUPFAM" id="SSF81296">
    <property type="entry name" value="E set domains"/>
    <property type="match status" value="2"/>
</dbReference>
<dbReference type="PROSITE" id="PS50194">
    <property type="entry name" value="FILAMIN_REPEAT"/>
    <property type="match status" value="2"/>
</dbReference>
<reference key="1">
    <citation type="journal article" date="1998" name="DNA Res.">
        <title>Structural analysis of Arabidopsis thaliana chromosome 5. VIII. Sequence features of the regions of 1,081,958 bp covered by seventeen physically assigned P1 and TAC clones.</title>
        <authorList>
            <person name="Asamizu E."/>
            <person name="Sato S."/>
            <person name="Kaneko T."/>
            <person name="Nakamura Y."/>
            <person name="Kotani H."/>
            <person name="Miyajima N."/>
            <person name="Tabata S."/>
        </authorList>
    </citation>
    <scope>NUCLEOTIDE SEQUENCE [LARGE SCALE GENOMIC DNA]</scope>
    <source>
        <strain>cv. Columbia</strain>
    </source>
</reference>
<reference key="2">
    <citation type="journal article" date="2017" name="Plant J.">
        <title>Araport11: a complete reannotation of the Arabidopsis thaliana reference genome.</title>
        <authorList>
            <person name="Cheng C.Y."/>
            <person name="Krishnakumar V."/>
            <person name="Chan A.P."/>
            <person name="Thibaud-Nissen F."/>
            <person name="Schobel S."/>
            <person name="Town C.D."/>
        </authorList>
    </citation>
    <scope>GENOME REANNOTATION</scope>
    <source>
        <strain>cv. Columbia</strain>
    </source>
</reference>
<reference key="3">
    <citation type="journal article" date="2005" name="Plant Physiol.">
        <title>Green sperm. Identification of male gamete promoters in Arabidopsis.</title>
        <authorList>
            <person name="Engel M.L."/>
            <person name="Holmes-Davis R."/>
            <person name="McCormick S."/>
        </authorList>
    </citation>
    <scope>NUCLEOTIDE SEQUENCE [MRNA] OF 30-914</scope>
    <scope>TISSUE SPECIFICITY</scope>
    <scope>SUBCELLULAR LOCATION</scope>
    <source>
        <tissue>Pollen</tissue>
    </source>
</reference>
<reference key="4">
    <citation type="journal article" date="2008" name="Mol. Plant">
        <title>GEX3, expressed in the male gametophyte and in the egg cell of Arabidopsis thaliana, is essential for micropylar pollen tube guidance and plays a role during early embryogenesis.</title>
        <authorList>
            <person name="Alandete-Saez M."/>
            <person name="Ron M."/>
            <person name="McCormick S."/>
        </authorList>
    </citation>
    <scope>TISSUE SPECIFICITY</scope>
</reference>
<sequence>MVGIFNIVIDEENFKVLDSSLHFEVEAGLMYPSVSVVSWMGLANVFEAGMNASILILPKDAFGNNISFSGKKMEFQEFSLSLISENGSFAGVLNSTHIRWIVSGYISIDFVLVTSGKFLLLVEKESQTLNGGPLPLEVNSGPLDVSNCVSIWKSELSTWQIFSKMEILLHQKDRFGNIVSGFYEFDADVVEVETGLSIPVADFQFEYVEPGIQLMSFTLSEPGNFLLTLSDMKHNKSISSMPYVYTVYIGYCDGSRSIVNGSGINASIAGESLGFSVYLKDAYGYPSPVQVDRLQVRIVLEIDSSIILPTIQPREALNGTGSSHQAATPLYEKHGGRASGNLVTQASIFDVTYTPKRTGIYRIFISSGNIVLNGGQPFIKEVYAGEVNVAACSVTQFNGKVPKEIKNEIVVLLLDGFYNPVPSQPSRLKFEITSANTSSFTTWEFVDNNDGTYTGSYLAMEVGTYRMCISFDNKHIQPCPFDVNVYSNGYFPRAYDDPVNVWEDESISFNPLENDYFAGDNASMLGFSQPGHGSLLRDGNLLRYTPMKNFSGNDSFLYTIADINGNLAAATVYIFVLTAPPQFVSFSGGLQATEDLISPRYGGFSGLEISYSDLLENISVMVQALSGSVILSPMLMQFRPPGSGKLSVSNGGEDRRVLILEGQVGVINPALQSIQYLGNENFAGVDSLRLSTKNKNGINHLDVPVFVEPVNDPPFINVPQYIMLESNGSESLIFHPERDKFNFSVGDPDLVNFPGGESHFLVTFSLEVTDGFLLTNLPSELINSTELKFKNLFQWQPIQTYAAISKHVNVKASGIRFRGTIRQCNDLMQQLLHRGGENGAVLTLKLSDMGNYGCFLDCTERISLPLHAEARVNLIRKRPLSSLGAHGTFMKYLVVVPFSFFSIKLFSLLMVLIG</sequence>
<accession>F4K4R6</accession>
<accession>Q49L64</accession>
<accession>Q9FJ23</accession>
<feature type="chain" id="PRO_0000416785" description="Protein GAMETE EXPRESSED 2">
    <location>
        <begin position="1"/>
        <end position="914"/>
    </location>
</feature>
<feature type="transmembrane region" description="Helical" evidence="1">
    <location>
        <begin position="893"/>
        <end position="913"/>
    </location>
</feature>
<feature type="repeat" description="Filamin 1">
    <location>
        <begin position="249"/>
        <end position="382"/>
    </location>
</feature>
<feature type="repeat" description="Filamin 2">
    <location>
        <begin position="391"/>
        <end position="485"/>
    </location>
</feature>
<feature type="sequence conflict" description="In Ref. 3; AAW70161." evidence="4" ref="3">
    <original>T</original>
    <variation>A</variation>
    <location>
        <position position="320"/>
    </location>
</feature>
<feature type="sequence conflict" description="In Ref. 3; AAW70161." evidence="4" ref="3">
    <original>V</original>
    <variation>A</variation>
    <location>
        <position position="841"/>
    </location>
</feature>
<feature type="sequence conflict" description="In Ref. 3; AAW70161." evidence="4" ref="3">
    <original>L</original>
    <variation>S</variation>
    <location>
        <position position="893"/>
    </location>
</feature>
<organism>
    <name type="scientific">Arabidopsis thaliana</name>
    <name type="common">Mouse-ear cress</name>
    <dbReference type="NCBI Taxonomy" id="3702"/>
    <lineage>
        <taxon>Eukaryota</taxon>
        <taxon>Viridiplantae</taxon>
        <taxon>Streptophyta</taxon>
        <taxon>Embryophyta</taxon>
        <taxon>Tracheophyta</taxon>
        <taxon>Spermatophyta</taxon>
        <taxon>Magnoliopsida</taxon>
        <taxon>eudicotyledons</taxon>
        <taxon>Gunneridae</taxon>
        <taxon>Pentapetalae</taxon>
        <taxon>rosids</taxon>
        <taxon>malvids</taxon>
        <taxon>Brassicales</taxon>
        <taxon>Brassicaceae</taxon>
        <taxon>Camelineae</taxon>
        <taxon>Arabidopsis</taxon>
    </lineage>
</organism>
<name>GEX2_ARATH</name>
<protein>
    <recommendedName>
        <fullName>Protein GAMETE EXPRESSED 2</fullName>
    </recommendedName>
</protein>
<keyword id="KW-1003">Cell membrane</keyword>
<keyword id="KW-0472">Membrane</keyword>
<keyword id="KW-1185">Reference proteome</keyword>
<keyword id="KW-0677">Repeat</keyword>
<keyword id="KW-0812">Transmembrane</keyword>
<keyword id="KW-1133">Transmembrane helix</keyword>
<proteinExistence type="evidence at transcript level"/>
<comment type="subcellular location">
    <subcellularLocation>
        <location evidence="2">Cell membrane</location>
        <topology evidence="2">Single-pass membrane protein</topology>
    </subcellularLocation>
</comment>
<comment type="tissue specificity">
    <text evidence="2 3">In tricellular pollen, expressed in mature sperm cells but not in the vegetative cell. In bicellular pollen, detected in the progenitor generative cell. Detected in the egg cell within the female gametophyte.</text>
</comment>
<comment type="sequence caution" evidence="4">
    <conflict type="erroneous gene model prediction">
        <sequence resource="EMBL-CDS" id="BAB10333"/>
    </conflict>
</comment>